<accession>C5BHX7</accession>
<proteinExistence type="inferred from homology"/>
<sequence>MHPKRKQRLILVLFVVLVSSVGVSLTLYALNENINLFYPPTKIVNGEAPSGRTIRAGGCVVPGTVTRAKDNLEIDFDVTDGVSELSVTYDGILPDLFAEGEAVVLTGMLDHDGVFVATKVLAKHDENYMPPEVADTVTTDGVEHMKTCKGISYDS</sequence>
<keyword id="KW-0997">Cell inner membrane</keyword>
<keyword id="KW-1003">Cell membrane</keyword>
<keyword id="KW-0201">Cytochrome c-type biogenesis</keyword>
<keyword id="KW-0349">Heme</keyword>
<keyword id="KW-0408">Iron</keyword>
<keyword id="KW-0472">Membrane</keyword>
<keyword id="KW-0479">Metal-binding</keyword>
<keyword id="KW-1185">Reference proteome</keyword>
<keyword id="KW-0735">Signal-anchor</keyword>
<keyword id="KW-0812">Transmembrane</keyword>
<keyword id="KW-1133">Transmembrane helix</keyword>
<protein>
    <recommendedName>
        <fullName evidence="1">Cytochrome c-type biogenesis protein CcmE</fullName>
    </recommendedName>
    <alternativeName>
        <fullName evidence="1">Cytochrome c maturation protein E</fullName>
    </alternativeName>
    <alternativeName>
        <fullName evidence="1">Heme chaperone CcmE</fullName>
    </alternativeName>
</protein>
<name>CCME_TERTT</name>
<feature type="chain" id="PRO_1000216219" description="Cytochrome c-type biogenesis protein CcmE">
    <location>
        <begin position="1"/>
        <end position="155"/>
    </location>
</feature>
<feature type="topological domain" description="Cytoplasmic" evidence="1">
    <location>
        <begin position="1"/>
        <end position="8"/>
    </location>
</feature>
<feature type="transmembrane region" description="Helical; Signal-anchor for type II membrane protein" evidence="1">
    <location>
        <begin position="9"/>
        <end position="29"/>
    </location>
</feature>
<feature type="topological domain" description="Periplasmic" evidence="1">
    <location>
        <begin position="30"/>
        <end position="155"/>
    </location>
</feature>
<feature type="binding site" description="covalent" evidence="1">
    <location>
        <position position="124"/>
    </location>
    <ligand>
        <name>heme</name>
        <dbReference type="ChEBI" id="CHEBI:30413"/>
    </ligand>
</feature>
<feature type="binding site" description="axial binding residue" evidence="1">
    <location>
        <position position="128"/>
    </location>
    <ligand>
        <name>heme</name>
        <dbReference type="ChEBI" id="CHEBI:30413"/>
    </ligand>
    <ligandPart>
        <name>Fe</name>
        <dbReference type="ChEBI" id="CHEBI:18248"/>
    </ligandPart>
</feature>
<evidence type="ECO:0000255" key="1">
    <source>
        <dbReference type="HAMAP-Rule" id="MF_01959"/>
    </source>
</evidence>
<dbReference type="EMBL" id="CP001614">
    <property type="protein sequence ID" value="ACR13536.1"/>
    <property type="molecule type" value="Genomic_DNA"/>
</dbReference>
<dbReference type="RefSeq" id="WP_015819650.1">
    <property type="nucleotide sequence ID" value="NC_012997.1"/>
</dbReference>
<dbReference type="SMR" id="C5BHX7"/>
<dbReference type="STRING" id="377629.TERTU_1867"/>
<dbReference type="KEGG" id="ttu:TERTU_1867"/>
<dbReference type="eggNOG" id="COG2332">
    <property type="taxonomic scope" value="Bacteria"/>
</dbReference>
<dbReference type="HOGENOM" id="CLU_079503_1_1_6"/>
<dbReference type="OrthoDB" id="9793584at2"/>
<dbReference type="Proteomes" id="UP000009080">
    <property type="component" value="Chromosome"/>
</dbReference>
<dbReference type="GO" id="GO:0005886">
    <property type="term" value="C:plasma membrane"/>
    <property type="evidence" value="ECO:0007669"/>
    <property type="project" value="UniProtKB-SubCell"/>
</dbReference>
<dbReference type="GO" id="GO:0020037">
    <property type="term" value="F:heme binding"/>
    <property type="evidence" value="ECO:0007669"/>
    <property type="project" value="InterPro"/>
</dbReference>
<dbReference type="GO" id="GO:0046872">
    <property type="term" value="F:metal ion binding"/>
    <property type="evidence" value="ECO:0007669"/>
    <property type="project" value="UniProtKB-KW"/>
</dbReference>
<dbReference type="GO" id="GO:0017004">
    <property type="term" value="P:cytochrome complex assembly"/>
    <property type="evidence" value="ECO:0007669"/>
    <property type="project" value="UniProtKB-KW"/>
</dbReference>
<dbReference type="FunFam" id="2.40.50.140:FF:000104">
    <property type="entry name" value="Cytochrome c-type biogenesis protein CcmE"/>
    <property type="match status" value="1"/>
</dbReference>
<dbReference type="Gene3D" id="2.40.50.140">
    <property type="entry name" value="Nucleic acid-binding proteins"/>
    <property type="match status" value="1"/>
</dbReference>
<dbReference type="HAMAP" id="MF_01959">
    <property type="entry name" value="CcmE"/>
    <property type="match status" value="1"/>
</dbReference>
<dbReference type="InterPro" id="IPR004329">
    <property type="entry name" value="CcmE"/>
</dbReference>
<dbReference type="InterPro" id="IPR036127">
    <property type="entry name" value="CcmE-like_sf"/>
</dbReference>
<dbReference type="InterPro" id="IPR012340">
    <property type="entry name" value="NA-bd_OB-fold"/>
</dbReference>
<dbReference type="NCBIfam" id="NF009727">
    <property type="entry name" value="PRK13254.1-1"/>
    <property type="match status" value="1"/>
</dbReference>
<dbReference type="NCBIfam" id="NF009729">
    <property type="entry name" value="PRK13254.1-3"/>
    <property type="match status" value="1"/>
</dbReference>
<dbReference type="NCBIfam" id="NF009731">
    <property type="entry name" value="PRK13254.1-5"/>
    <property type="match status" value="1"/>
</dbReference>
<dbReference type="PANTHER" id="PTHR34128">
    <property type="entry name" value="CYTOCHROME C-TYPE BIOGENESIS PROTEIN CCME HOMOLOG, MITOCHONDRIAL"/>
    <property type="match status" value="1"/>
</dbReference>
<dbReference type="PANTHER" id="PTHR34128:SF2">
    <property type="entry name" value="CYTOCHROME C-TYPE BIOGENESIS PROTEIN CCME HOMOLOG, MITOCHONDRIAL"/>
    <property type="match status" value="1"/>
</dbReference>
<dbReference type="Pfam" id="PF03100">
    <property type="entry name" value="CcmE"/>
    <property type="match status" value="1"/>
</dbReference>
<dbReference type="SUPFAM" id="SSF82093">
    <property type="entry name" value="Heme chaperone CcmE"/>
    <property type="match status" value="1"/>
</dbReference>
<comment type="function">
    <text evidence="1">Heme chaperone required for the biogenesis of c-type cytochromes. Transiently binds heme delivered by CcmC and transfers the heme to apo-cytochromes in a process facilitated by CcmF and CcmH.</text>
</comment>
<comment type="subcellular location">
    <subcellularLocation>
        <location evidence="1">Cell inner membrane</location>
        <topology evidence="1">Single-pass type II membrane protein</topology>
        <orientation evidence="1">Periplasmic side</orientation>
    </subcellularLocation>
</comment>
<comment type="similarity">
    <text evidence="1">Belongs to the CcmE/CycJ family.</text>
</comment>
<gene>
    <name evidence="1" type="primary">ccmE</name>
    <name evidence="1" type="synonym">cycJ</name>
    <name type="ordered locus">TERTU_1867</name>
</gene>
<organism>
    <name type="scientific">Teredinibacter turnerae (strain ATCC 39867 / T7901)</name>
    <dbReference type="NCBI Taxonomy" id="377629"/>
    <lineage>
        <taxon>Bacteria</taxon>
        <taxon>Pseudomonadati</taxon>
        <taxon>Pseudomonadota</taxon>
        <taxon>Gammaproteobacteria</taxon>
        <taxon>Cellvibrionales</taxon>
        <taxon>Cellvibrionaceae</taxon>
        <taxon>Teredinibacter</taxon>
    </lineage>
</organism>
<reference key="1">
    <citation type="journal article" date="2009" name="PLoS ONE">
        <title>The complete genome of Teredinibacter turnerae T7901: an intracellular endosymbiont of marine wood-boring bivalves (shipworms).</title>
        <authorList>
            <person name="Yang J.C."/>
            <person name="Madupu R."/>
            <person name="Durkin A.S."/>
            <person name="Ekborg N.A."/>
            <person name="Pedamallu C.S."/>
            <person name="Hostetler J.B."/>
            <person name="Radune D."/>
            <person name="Toms B.S."/>
            <person name="Henrissat B."/>
            <person name="Coutinho P.M."/>
            <person name="Schwarz S."/>
            <person name="Field L."/>
            <person name="Trindade-Silva A.E."/>
            <person name="Soares C.A.G."/>
            <person name="Elshahawi S."/>
            <person name="Hanora A."/>
            <person name="Schmidt E.W."/>
            <person name="Haygood M.G."/>
            <person name="Posfai J."/>
            <person name="Benner J."/>
            <person name="Madinger C."/>
            <person name="Nove J."/>
            <person name="Anton B."/>
            <person name="Chaudhary K."/>
            <person name="Foster J."/>
            <person name="Holman A."/>
            <person name="Kumar S."/>
            <person name="Lessard P.A."/>
            <person name="Luyten Y.A."/>
            <person name="Slatko B."/>
            <person name="Wood N."/>
            <person name="Wu B."/>
            <person name="Teplitski M."/>
            <person name="Mougous J.D."/>
            <person name="Ward N."/>
            <person name="Eisen J.A."/>
            <person name="Badger J.H."/>
            <person name="Distel D.L."/>
        </authorList>
    </citation>
    <scope>NUCLEOTIDE SEQUENCE [LARGE SCALE GENOMIC DNA]</scope>
    <source>
        <strain>ATCC 39867 / T7901</strain>
    </source>
</reference>